<reference key="1">
    <citation type="journal article" date="2004" name="J. Bacteriol.">
        <title>Complete genome sequence of the genetically tractable hydrogenotrophic methanogen Methanococcus maripaludis.</title>
        <authorList>
            <person name="Hendrickson E.L."/>
            <person name="Kaul R."/>
            <person name="Zhou Y."/>
            <person name="Bovee D."/>
            <person name="Chapman P."/>
            <person name="Chung J."/>
            <person name="Conway de Macario E."/>
            <person name="Dodsworth J.A."/>
            <person name="Gillett W."/>
            <person name="Graham D.E."/>
            <person name="Hackett M."/>
            <person name="Haydock A.K."/>
            <person name="Kang A."/>
            <person name="Land M.L."/>
            <person name="Levy R."/>
            <person name="Lie T.J."/>
            <person name="Major T.A."/>
            <person name="Moore B.C."/>
            <person name="Porat I."/>
            <person name="Palmeiri A."/>
            <person name="Rouse G."/>
            <person name="Saenphimmachak C."/>
            <person name="Soell D."/>
            <person name="Van Dien S."/>
            <person name="Wang T."/>
            <person name="Whitman W.B."/>
            <person name="Xia Q."/>
            <person name="Zhang Y."/>
            <person name="Larimer F.W."/>
            <person name="Olson M.V."/>
            <person name="Leigh J.A."/>
        </authorList>
    </citation>
    <scope>NUCLEOTIDE SEQUENCE [LARGE SCALE GENOMIC DNA]</scope>
    <source>
        <strain>DSM 14266 / JCM 13030 / NBRC 101832 / S2 / LL</strain>
    </source>
</reference>
<name>DNAG_METMP</name>
<feature type="chain" id="PRO_0000240456" description="DNA primase DnaG">
    <location>
        <begin position="1"/>
        <end position="436"/>
    </location>
</feature>
<feature type="domain" description="Toprim" evidence="1">
    <location>
        <begin position="169"/>
        <end position="243"/>
    </location>
</feature>
<feature type="binding site" evidence="1">
    <location>
        <position position="175"/>
    </location>
    <ligand>
        <name>Mg(2+)</name>
        <dbReference type="ChEBI" id="CHEBI:18420"/>
        <label>1</label>
        <note>catalytic</note>
    </ligand>
</feature>
<feature type="binding site" evidence="1">
    <location>
        <position position="217"/>
    </location>
    <ligand>
        <name>Mg(2+)</name>
        <dbReference type="ChEBI" id="CHEBI:18420"/>
        <label>1</label>
        <note>catalytic</note>
    </ligand>
</feature>
<feature type="binding site" evidence="1">
    <location>
        <position position="217"/>
    </location>
    <ligand>
        <name>Mg(2+)</name>
        <dbReference type="ChEBI" id="CHEBI:18420"/>
        <label>2</label>
    </ligand>
</feature>
<feature type="binding site" evidence="1">
    <location>
        <position position="219"/>
    </location>
    <ligand>
        <name>Mg(2+)</name>
        <dbReference type="ChEBI" id="CHEBI:18420"/>
        <label>2</label>
    </ligand>
</feature>
<proteinExistence type="inferred from homology"/>
<keyword id="KW-0235">DNA replication</keyword>
<keyword id="KW-0240">DNA-directed RNA polymerase</keyword>
<keyword id="KW-0460">Magnesium</keyword>
<keyword id="KW-0479">Metal-binding</keyword>
<keyword id="KW-0548">Nucleotidyltransferase</keyword>
<keyword id="KW-0639">Primosome</keyword>
<keyword id="KW-1185">Reference proteome</keyword>
<keyword id="KW-0804">Transcription</keyword>
<keyword id="KW-0808">Transferase</keyword>
<evidence type="ECO:0000255" key="1">
    <source>
        <dbReference type="HAMAP-Rule" id="MF_00007"/>
    </source>
</evidence>
<organism>
    <name type="scientific">Methanococcus maripaludis (strain DSM 14266 / JCM 13030 / NBRC 101832 / S2 / LL)</name>
    <dbReference type="NCBI Taxonomy" id="267377"/>
    <lineage>
        <taxon>Archaea</taxon>
        <taxon>Methanobacteriati</taxon>
        <taxon>Methanobacteriota</taxon>
        <taxon>Methanomada group</taxon>
        <taxon>Methanococci</taxon>
        <taxon>Methanococcales</taxon>
        <taxon>Methanococcaceae</taxon>
        <taxon>Methanococcus</taxon>
    </lineage>
</organism>
<accession>Q6LXR3</accession>
<dbReference type="EC" id="2.7.7.101" evidence="1"/>
<dbReference type="EMBL" id="BX950229">
    <property type="protein sequence ID" value="CAF30842.1"/>
    <property type="molecule type" value="Genomic_DNA"/>
</dbReference>
<dbReference type="RefSeq" id="WP_011171230.1">
    <property type="nucleotide sequence ID" value="NC_005791.1"/>
</dbReference>
<dbReference type="SMR" id="Q6LXR3"/>
<dbReference type="STRING" id="267377.MMP1286"/>
<dbReference type="EnsemblBacteria" id="CAF30842">
    <property type="protein sequence ID" value="CAF30842"/>
    <property type="gene ID" value="MMP1286"/>
</dbReference>
<dbReference type="GeneID" id="2762685"/>
<dbReference type="KEGG" id="mmp:MMP1286"/>
<dbReference type="PATRIC" id="fig|267377.15.peg.1319"/>
<dbReference type="eggNOG" id="arCOG04281">
    <property type="taxonomic scope" value="Archaea"/>
</dbReference>
<dbReference type="HOGENOM" id="CLU_034626_0_0_2"/>
<dbReference type="OrthoDB" id="8643at2157"/>
<dbReference type="Proteomes" id="UP000000590">
    <property type="component" value="Chromosome"/>
</dbReference>
<dbReference type="GO" id="GO:0005737">
    <property type="term" value="C:cytoplasm"/>
    <property type="evidence" value="ECO:0007669"/>
    <property type="project" value="TreeGrafter"/>
</dbReference>
<dbReference type="GO" id="GO:0000428">
    <property type="term" value="C:DNA-directed RNA polymerase complex"/>
    <property type="evidence" value="ECO:0007669"/>
    <property type="project" value="UniProtKB-KW"/>
</dbReference>
<dbReference type="GO" id="GO:0000178">
    <property type="term" value="C:exosome (RNase complex)"/>
    <property type="evidence" value="ECO:0007669"/>
    <property type="project" value="InterPro"/>
</dbReference>
<dbReference type="GO" id="GO:1990077">
    <property type="term" value="C:primosome complex"/>
    <property type="evidence" value="ECO:0007669"/>
    <property type="project" value="UniProtKB-KW"/>
</dbReference>
<dbReference type="GO" id="GO:0003899">
    <property type="term" value="F:DNA-directed RNA polymerase activity"/>
    <property type="evidence" value="ECO:0007669"/>
    <property type="project" value="InterPro"/>
</dbReference>
<dbReference type="GO" id="GO:0046872">
    <property type="term" value="F:metal ion binding"/>
    <property type="evidence" value="ECO:0007669"/>
    <property type="project" value="UniProtKB-KW"/>
</dbReference>
<dbReference type="GO" id="GO:0008143">
    <property type="term" value="F:poly(A) binding"/>
    <property type="evidence" value="ECO:0007669"/>
    <property type="project" value="InterPro"/>
</dbReference>
<dbReference type="GO" id="GO:0006269">
    <property type="term" value="P:DNA replication, synthesis of primer"/>
    <property type="evidence" value="ECO:0007669"/>
    <property type="project" value="UniProtKB-UniRule"/>
</dbReference>
<dbReference type="CDD" id="cd01029">
    <property type="entry name" value="TOPRIM_primases"/>
    <property type="match status" value="1"/>
</dbReference>
<dbReference type="FunFam" id="3.40.1360.10:FF:000010">
    <property type="entry name" value="DNA primase DnaG"/>
    <property type="match status" value="1"/>
</dbReference>
<dbReference type="Gene3D" id="3.40.1360.10">
    <property type="match status" value="1"/>
</dbReference>
<dbReference type="HAMAP" id="MF_00007">
    <property type="entry name" value="DNA_primase_DnaG_arc"/>
    <property type="match status" value="1"/>
</dbReference>
<dbReference type="InterPro" id="IPR050219">
    <property type="entry name" value="DnaG_primase"/>
</dbReference>
<dbReference type="InterPro" id="IPR020607">
    <property type="entry name" value="Primase_DnaG_arc"/>
</dbReference>
<dbReference type="InterPro" id="IPR034154">
    <property type="entry name" value="TOPRIM_DnaG/twinkle"/>
</dbReference>
<dbReference type="InterPro" id="IPR006171">
    <property type="entry name" value="TOPRIM_dom"/>
</dbReference>
<dbReference type="NCBIfam" id="NF003108">
    <property type="entry name" value="PRK04031.1-1"/>
    <property type="match status" value="1"/>
</dbReference>
<dbReference type="PANTHER" id="PTHR30313">
    <property type="entry name" value="DNA PRIMASE"/>
    <property type="match status" value="1"/>
</dbReference>
<dbReference type="PANTHER" id="PTHR30313:SF2">
    <property type="entry name" value="DNA PRIMASE"/>
    <property type="match status" value="1"/>
</dbReference>
<dbReference type="Pfam" id="PF13662">
    <property type="entry name" value="Toprim_4"/>
    <property type="match status" value="1"/>
</dbReference>
<dbReference type="SMART" id="SM00493">
    <property type="entry name" value="TOPRIM"/>
    <property type="match status" value="1"/>
</dbReference>
<dbReference type="SUPFAM" id="SSF56731">
    <property type="entry name" value="DNA primase core"/>
    <property type="match status" value="1"/>
</dbReference>
<dbReference type="PROSITE" id="PS50880">
    <property type="entry name" value="TOPRIM"/>
    <property type="match status" value="1"/>
</dbReference>
<gene>
    <name evidence="1" type="primary">dnaG</name>
    <name type="ordered locus">MMP1286</name>
</gene>
<protein>
    <recommendedName>
        <fullName evidence="1">DNA primase DnaG</fullName>
        <ecNumber evidence="1">2.7.7.101</ecNumber>
    </recommendedName>
</protein>
<comment type="function">
    <text evidence="1">RNA polymerase that catalyzes the synthesis of short RNA molecules used as primers for DNA polymerase during DNA replication.</text>
</comment>
<comment type="catalytic activity">
    <reaction evidence="1">
        <text>ssDNA + n NTP = ssDNA/pppN(pN)n-1 hybrid + (n-1) diphosphate.</text>
        <dbReference type="EC" id="2.7.7.101"/>
    </reaction>
</comment>
<comment type="cofactor">
    <cofactor evidence="1">
        <name>Mg(2+)</name>
        <dbReference type="ChEBI" id="CHEBI:18420"/>
    </cofactor>
    <text evidence="1">Binds two Mg(2+) per subunit.</text>
</comment>
<comment type="subunit">
    <text evidence="1">Forms a ternary complex with MCM helicase and DNA.</text>
</comment>
<comment type="similarity">
    <text evidence="1">Belongs to the archaeal DnaG primase family.</text>
</comment>
<sequence>MDLGTTKYIIYTELIADGYVEKHDVIGAIFGQTEGLLSNELDLRDLQKSGRIGRIDVELENINGKSFAKITLPSSLDKVETSILAATLETIDRVGPCFATVKITEVEDIRVSKRQYITNRARSILRKLMDEMIDTYEITEEIKESLRTEEIMEYGPENLPCGPNIIHSDSIIVVEGRADVLNLLRCGIKNTVAVEGTSVPKSIMELTKKKTTTAFTDGDRGGELILKELLQTCDIDYVARAPYGKEVEGTSKKELMKCLRAKVPVEQIVGNNCNGSGVIESNTPKEIVEPITPKHFEKVETPAVIEPVFKEDAIEEETIIVEPVKKAETEIIDVDATNETQSEKKFSGVKEIVDSIKNTGNVKFVVDGTEKTNTFKEFLTNIHEIKKMDFFAADMPISQKIVDLLYDKTPIIVGKEINVTKKPVNLRLFSFDEIVA</sequence>